<comment type="subcellular location">
    <subcellularLocation>
        <location evidence="1">Cytoplasm</location>
    </subcellularLocation>
</comment>
<comment type="similarity">
    <text evidence="1">Belongs to the TACO1 family.</text>
</comment>
<keyword id="KW-0963">Cytoplasm</keyword>
<keyword id="KW-0238">DNA-binding</keyword>
<keyword id="KW-0804">Transcription</keyword>
<keyword id="KW-0805">Transcription regulation</keyword>
<feature type="chain" id="PRO_1000200072" description="Probable transcriptional regulatory protein A2cp1_1765">
    <location>
        <begin position="1"/>
        <end position="240"/>
    </location>
</feature>
<accession>B8J6C6</accession>
<proteinExistence type="inferred from homology"/>
<protein>
    <recommendedName>
        <fullName evidence="1">Probable transcriptional regulatory protein A2cp1_1765</fullName>
    </recommendedName>
</protein>
<sequence>MGRIFETRKATMFARWNKMAKAFTRISKDIAIAVKGGGPNPDNNPALRRVLQNARHLNMPKDKVEAAIKRASGQDQQAYEVVVYEGYAPHGVAVMVETATDNVVRTVANVRMHFKNNGGNMGNTGSVAFQFRRMGVFRLAPEGIDQDALELDLIDHGLEEMGESTGEKGEKLLVIRCAFESFGQLQAALEERKLNVLSAESEYVAQTPVQLGEEQAREVLELVDALEQDEDVQHVFHNLA</sequence>
<reference key="1">
    <citation type="submission" date="2009-01" db="EMBL/GenBank/DDBJ databases">
        <title>Complete sequence of Anaeromyxobacter dehalogenans 2CP-1.</title>
        <authorList>
            <person name="Lucas S."/>
            <person name="Copeland A."/>
            <person name="Lapidus A."/>
            <person name="Glavina del Rio T."/>
            <person name="Dalin E."/>
            <person name="Tice H."/>
            <person name="Bruce D."/>
            <person name="Goodwin L."/>
            <person name="Pitluck S."/>
            <person name="Saunders E."/>
            <person name="Brettin T."/>
            <person name="Detter J.C."/>
            <person name="Han C."/>
            <person name="Larimer F."/>
            <person name="Land M."/>
            <person name="Hauser L."/>
            <person name="Kyrpides N."/>
            <person name="Ovchinnikova G."/>
            <person name="Beliaev A.S."/>
            <person name="Richardson P."/>
        </authorList>
    </citation>
    <scope>NUCLEOTIDE SEQUENCE [LARGE SCALE GENOMIC DNA]</scope>
    <source>
        <strain>2CP-1 / ATCC BAA-258</strain>
    </source>
</reference>
<name>Y1765_ANAD2</name>
<organism>
    <name type="scientific">Anaeromyxobacter dehalogenans (strain 2CP-1 / ATCC BAA-258)</name>
    <dbReference type="NCBI Taxonomy" id="455488"/>
    <lineage>
        <taxon>Bacteria</taxon>
        <taxon>Pseudomonadati</taxon>
        <taxon>Myxococcota</taxon>
        <taxon>Myxococcia</taxon>
        <taxon>Myxococcales</taxon>
        <taxon>Cystobacterineae</taxon>
        <taxon>Anaeromyxobacteraceae</taxon>
        <taxon>Anaeromyxobacter</taxon>
    </lineage>
</organism>
<dbReference type="EMBL" id="CP001359">
    <property type="protein sequence ID" value="ACL65107.1"/>
    <property type="molecule type" value="Genomic_DNA"/>
</dbReference>
<dbReference type="RefSeq" id="WP_012525741.1">
    <property type="nucleotide sequence ID" value="NC_011891.1"/>
</dbReference>
<dbReference type="SMR" id="B8J6C6"/>
<dbReference type="KEGG" id="acp:A2cp1_1765"/>
<dbReference type="HOGENOM" id="CLU_062974_3_0_7"/>
<dbReference type="Proteomes" id="UP000007089">
    <property type="component" value="Chromosome"/>
</dbReference>
<dbReference type="GO" id="GO:0005829">
    <property type="term" value="C:cytosol"/>
    <property type="evidence" value="ECO:0007669"/>
    <property type="project" value="TreeGrafter"/>
</dbReference>
<dbReference type="GO" id="GO:0003677">
    <property type="term" value="F:DNA binding"/>
    <property type="evidence" value="ECO:0007669"/>
    <property type="project" value="UniProtKB-UniRule"/>
</dbReference>
<dbReference type="GO" id="GO:0006355">
    <property type="term" value="P:regulation of DNA-templated transcription"/>
    <property type="evidence" value="ECO:0007669"/>
    <property type="project" value="UniProtKB-UniRule"/>
</dbReference>
<dbReference type="FunFam" id="1.10.10.200:FF:000004">
    <property type="entry name" value="Probable transcriptional regulatory protein BSBG_02618"/>
    <property type="match status" value="1"/>
</dbReference>
<dbReference type="Gene3D" id="1.10.10.200">
    <property type="match status" value="1"/>
</dbReference>
<dbReference type="Gene3D" id="3.30.70.980">
    <property type="match status" value="2"/>
</dbReference>
<dbReference type="HAMAP" id="MF_00693">
    <property type="entry name" value="Transcrip_reg_TACO1"/>
    <property type="match status" value="1"/>
</dbReference>
<dbReference type="InterPro" id="IPR017856">
    <property type="entry name" value="Integrase-like_N"/>
</dbReference>
<dbReference type="InterPro" id="IPR048300">
    <property type="entry name" value="TACO1_YebC-like_2nd/3rd_dom"/>
</dbReference>
<dbReference type="InterPro" id="IPR049083">
    <property type="entry name" value="TACO1_YebC_N"/>
</dbReference>
<dbReference type="InterPro" id="IPR002876">
    <property type="entry name" value="Transcrip_reg_TACO1-like"/>
</dbReference>
<dbReference type="InterPro" id="IPR026564">
    <property type="entry name" value="Transcrip_reg_TACO1-like_dom3"/>
</dbReference>
<dbReference type="InterPro" id="IPR029072">
    <property type="entry name" value="YebC-like"/>
</dbReference>
<dbReference type="NCBIfam" id="NF009044">
    <property type="entry name" value="PRK12378.1"/>
    <property type="match status" value="1"/>
</dbReference>
<dbReference type="NCBIfam" id="TIGR01033">
    <property type="entry name" value="YebC/PmpR family DNA-binding transcriptional regulator"/>
    <property type="match status" value="1"/>
</dbReference>
<dbReference type="PANTHER" id="PTHR12532:SF6">
    <property type="entry name" value="TRANSCRIPTIONAL REGULATORY PROTEIN YEBC-RELATED"/>
    <property type="match status" value="1"/>
</dbReference>
<dbReference type="PANTHER" id="PTHR12532">
    <property type="entry name" value="TRANSLATIONAL ACTIVATOR OF CYTOCHROME C OXIDASE 1"/>
    <property type="match status" value="1"/>
</dbReference>
<dbReference type="Pfam" id="PF20772">
    <property type="entry name" value="TACO1_YebC_N"/>
    <property type="match status" value="1"/>
</dbReference>
<dbReference type="Pfam" id="PF01709">
    <property type="entry name" value="Transcrip_reg"/>
    <property type="match status" value="1"/>
</dbReference>
<dbReference type="SUPFAM" id="SSF75625">
    <property type="entry name" value="YebC-like"/>
    <property type="match status" value="1"/>
</dbReference>
<evidence type="ECO:0000255" key="1">
    <source>
        <dbReference type="HAMAP-Rule" id="MF_00693"/>
    </source>
</evidence>
<gene>
    <name type="ordered locus">A2cp1_1765</name>
</gene>